<gene>
    <name type="primary">Prdm11</name>
</gene>
<name>PRD11_MOUSE</name>
<keyword id="KW-0963">Cytoplasm</keyword>
<keyword id="KW-1017">Isopeptide bond</keyword>
<keyword id="KW-0489">Methyltransferase</keyword>
<keyword id="KW-0539">Nucleus</keyword>
<keyword id="KW-0597">Phosphoprotein</keyword>
<keyword id="KW-1185">Reference proteome</keyword>
<keyword id="KW-0949">S-adenosyl-L-methionine</keyword>
<keyword id="KW-0804">Transcription</keyword>
<keyword id="KW-0805">Transcription regulation</keyword>
<keyword id="KW-0808">Transferase</keyword>
<keyword id="KW-0832">Ubl conjugation</keyword>
<accession>A2AGX3</accession>
<accession>A2AGX2</accession>
<accession>A2AGX4</accession>
<dbReference type="EC" id="2.1.1.-"/>
<dbReference type="EMBL" id="AL713913">
    <property type="protein sequence ID" value="CAM14370.1"/>
    <property type="status" value="ALT_SEQ"/>
    <property type="molecule type" value="Genomic_DNA"/>
</dbReference>
<dbReference type="EMBL" id="AL713913">
    <property type="protein sequence ID" value="CAM14371.1"/>
    <property type="molecule type" value="Genomic_DNA"/>
</dbReference>
<dbReference type="EMBL" id="AL713913">
    <property type="protein sequence ID" value="CAM14372.1"/>
    <property type="status" value="ALT_SEQ"/>
    <property type="molecule type" value="Genomic_DNA"/>
</dbReference>
<dbReference type="CCDS" id="CCDS50647.1"/>
<dbReference type="RefSeq" id="NP_001171007.1">
    <property type="nucleotide sequence ID" value="NM_001177536.2"/>
</dbReference>
<dbReference type="SMR" id="A2AGX3"/>
<dbReference type="BioGRID" id="786018">
    <property type="interactions" value="1"/>
</dbReference>
<dbReference type="FunCoup" id="A2AGX3">
    <property type="interactions" value="185"/>
</dbReference>
<dbReference type="STRING" id="10090.ENSMUSP00000106905"/>
<dbReference type="iPTMnet" id="A2AGX3"/>
<dbReference type="PhosphoSitePlus" id="A2AGX3"/>
<dbReference type="PaxDb" id="10090-ENSMUSP00000106905"/>
<dbReference type="ProteomicsDB" id="289837"/>
<dbReference type="Antibodypedia" id="26153">
    <property type="antibodies" value="143 antibodies from 26 providers"/>
</dbReference>
<dbReference type="Ensembl" id="ENSMUST00000111274.9">
    <property type="protein sequence ID" value="ENSMUSP00000106905.2"/>
    <property type="gene ID" value="ENSMUSG00000075028.13"/>
</dbReference>
<dbReference type="Ensembl" id="ENSMUST00000178666.8">
    <property type="protein sequence ID" value="ENSMUSP00000136795.2"/>
    <property type="gene ID" value="ENSMUSG00000075028.13"/>
</dbReference>
<dbReference type="GeneID" id="100042784"/>
<dbReference type="KEGG" id="mmu:100042784"/>
<dbReference type="UCSC" id="uc012bzp.1">
    <property type="organism name" value="mouse"/>
</dbReference>
<dbReference type="AGR" id="MGI:2685553"/>
<dbReference type="CTD" id="56981"/>
<dbReference type="MGI" id="MGI:2685553">
    <property type="gene designation" value="Prdm11"/>
</dbReference>
<dbReference type="VEuPathDB" id="HostDB:ENSMUSG00000075028"/>
<dbReference type="eggNOG" id="KOG2461">
    <property type="taxonomic scope" value="Eukaryota"/>
</dbReference>
<dbReference type="GeneTree" id="ENSGT00940000159837"/>
<dbReference type="HOGENOM" id="CLU_593911_0_0_1"/>
<dbReference type="InParanoid" id="A2AGX3"/>
<dbReference type="PhylomeDB" id="A2AGX3"/>
<dbReference type="TreeFam" id="TF316279"/>
<dbReference type="BioGRID-ORCS" id="100042784">
    <property type="hits" value="1 hit in 80 CRISPR screens"/>
</dbReference>
<dbReference type="ChiTaRS" id="Prdm11">
    <property type="organism name" value="mouse"/>
</dbReference>
<dbReference type="PRO" id="PR:A2AGX3"/>
<dbReference type="Proteomes" id="UP000000589">
    <property type="component" value="Chromosome 2"/>
</dbReference>
<dbReference type="RNAct" id="A2AGX3">
    <property type="molecule type" value="protein"/>
</dbReference>
<dbReference type="Bgee" id="ENSMUSG00000075028">
    <property type="expression patterns" value="Expressed in aortic valve and 115 other cell types or tissues"/>
</dbReference>
<dbReference type="ExpressionAtlas" id="A2AGX3">
    <property type="expression patterns" value="baseline and differential"/>
</dbReference>
<dbReference type="GO" id="GO:0005829">
    <property type="term" value="C:cytosol"/>
    <property type="evidence" value="ECO:0000250"/>
    <property type="project" value="UniProtKB"/>
</dbReference>
<dbReference type="GO" id="GO:0005634">
    <property type="term" value="C:nucleus"/>
    <property type="evidence" value="ECO:0000250"/>
    <property type="project" value="UniProtKB"/>
</dbReference>
<dbReference type="GO" id="GO:0003682">
    <property type="term" value="F:chromatin binding"/>
    <property type="evidence" value="ECO:0000314"/>
    <property type="project" value="MGI"/>
</dbReference>
<dbReference type="GO" id="GO:0008168">
    <property type="term" value="F:methyltransferase activity"/>
    <property type="evidence" value="ECO:0007669"/>
    <property type="project" value="UniProtKB-KW"/>
</dbReference>
<dbReference type="GO" id="GO:0032259">
    <property type="term" value="P:methylation"/>
    <property type="evidence" value="ECO:0007669"/>
    <property type="project" value="UniProtKB-KW"/>
</dbReference>
<dbReference type="GO" id="GO:0030308">
    <property type="term" value="P:negative regulation of cell growth"/>
    <property type="evidence" value="ECO:0000250"/>
    <property type="project" value="UniProtKB"/>
</dbReference>
<dbReference type="GO" id="GO:0045892">
    <property type="term" value="P:negative regulation of DNA-templated transcription"/>
    <property type="evidence" value="ECO:0000250"/>
    <property type="project" value="UniProtKB"/>
</dbReference>
<dbReference type="GO" id="GO:0045893">
    <property type="term" value="P:positive regulation of DNA-templated transcription"/>
    <property type="evidence" value="ECO:0000250"/>
    <property type="project" value="UniProtKB"/>
</dbReference>
<dbReference type="GO" id="GO:2000271">
    <property type="term" value="P:positive regulation of fibroblast apoptotic process"/>
    <property type="evidence" value="ECO:0000250"/>
    <property type="project" value="UniProtKB"/>
</dbReference>
<dbReference type="GO" id="GO:0051726">
    <property type="term" value="P:regulation of cell cycle"/>
    <property type="evidence" value="ECO:0000250"/>
    <property type="project" value="UniProtKB"/>
</dbReference>
<dbReference type="GO" id="GO:0043408">
    <property type="term" value="P:regulation of MAPK cascade"/>
    <property type="evidence" value="ECO:0000250"/>
    <property type="project" value="UniProtKB"/>
</dbReference>
<dbReference type="CDD" id="cd19195">
    <property type="entry name" value="PR-SET_PRDM11"/>
    <property type="match status" value="1"/>
</dbReference>
<dbReference type="FunFam" id="2.170.270.10:FF:000014">
    <property type="entry name" value="PR domain-containing protein 11"/>
    <property type="match status" value="1"/>
</dbReference>
<dbReference type="Gene3D" id="2.170.270.10">
    <property type="entry name" value="SET domain"/>
    <property type="match status" value="1"/>
</dbReference>
<dbReference type="InterPro" id="IPR044405">
    <property type="entry name" value="PRDM11_PR/SET"/>
</dbReference>
<dbReference type="InterPro" id="IPR001214">
    <property type="entry name" value="SET_dom"/>
</dbReference>
<dbReference type="InterPro" id="IPR046341">
    <property type="entry name" value="SET_dom_sf"/>
</dbReference>
<dbReference type="InterPro" id="IPR050331">
    <property type="entry name" value="Zinc_finger"/>
</dbReference>
<dbReference type="PANTHER" id="PTHR16515">
    <property type="entry name" value="PR DOMAIN ZINC FINGER PROTEIN"/>
    <property type="match status" value="1"/>
</dbReference>
<dbReference type="PANTHER" id="PTHR16515:SF48">
    <property type="entry name" value="PR DOMAIN-CONTAINING PROTEIN 11"/>
    <property type="match status" value="1"/>
</dbReference>
<dbReference type="Pfam" id="PF21549">
    <property type="entry name" value="PRDM2_PR"/>
    <property type="match status" value="1"/>
</dbReference>
<dbReference type="SUPFAM" id="SSF82199">
    <property type="entry name" value="SET domain"/>
    <property type="match status" value="1"/>
</dbReference>
<dbReference type="PROSITE" id="PS50280">
    <property type="entry name" value="SET"/>
    <property type="match status" value="1"/>
</dbReference>
<protein>
    <recommendedName>
        <fullName>PR domain-containing protein 11</fullName>
        <ecNumber>2.1.1.-</ecNumber>
    </recommendedName>
</protein>
<comment type="function">
    <text evidence="1">May be involved in transcription regulation.</text>
</comment>
<comment type="subcellular location">
    <subcellularLocation>
        <location evidence="1">Nucleus</location>
    </subcellularLocation>
    <subcellularLocation>
        <location evidence="1">Cytoplasm</location>
    </subcellularLocation>
</comment>
<comment type="tissue specificity">
    <text evidence="4">Widely expressed, with the highest levels in spleen, lung, mesenteric lymph node and kidney. Among splenocytes, predominantly expressed by B-cells (at protein level).</text>
</comment>
<comment type="disruption phenotype">
    <text evidence="4">Mutant mice are born in expected Mendelian ratios and exhibit no apparent phenotype. Mutant embryonic fibroblasts show an increased oncogenic transformation capacity.</text>
</comment>
<comment type="similarity">
    <text evidence="2">Belongs to the class V-like SAM-binding methyltransferase superfamily.</text>
</comment>
<comment type="sequence caution" evidence="5">
    <conflict type="erroneous gene model prediction">
        <sequence resource="EMBL-CDS" id="CAM14370"/>
    </conflict>
</comment>
<comment type="sequence caution" evidence="5">
    <conflict type="erroneous gene model prediction">
        <sequence resource="EMBL-CDS" id="CAM14372"/>
    </conflict>
</comment>
<proteinExistence type="evidence at protein level"/>
<feature type="chain" id="PRO_0000416113" description="PR domain-containing protein 11">
    <location>
        <begin position="1"/>
        <end position="565"/>
    </location>
</feature>
<feature type="domain" description="SET" evidence="2">
    <location>
        <begin position="115"/>
        <end position="226"/>
    </location>
</feature>
<feature type="region of interest" description="Disordered" evidence="3">
    <location>
        <begin position="371"/>
        <end position="399"/>
    </location>
</feature>
<feature type="region of interest" description="Disordered" evidence="3">
    <location>
        <begin position="477"/>
        <end position="506"/>
    </location>
</feature>
<feature type="modified residue" description="Phosphoserine" evidence="6">
    <location>
        <position position="29"/>
    </location>
</feature>
<feature type="cross-link" description="Glycyl lysine isopeptide (Lys-Gly) (interchain with G-Cter in SUMO2)" evidence="1">
    <location>
        <position position="54"/>
    </location>
</feature>
<feature type="cross-link" description="Glycyl lysine isopeptide (Lys-Gly) (interchain with G-Cter in SUMO2)" evidence="1">
    <location>
        <position position="121"/>
    </location>
</feature>
<feature type="cross-link" description="Glycyl lysine isopeptide (Lys-Gly) (interchain with G-Cter in SUMO2)" evidence="1">
    <location>
        <position position="138"/>
    </location>
</feature>
<feature type="cross-link" description="Glycyl lysine isopeptide (Lys-Gly) (interchain with G-Cter in SUMO2)" evidence="1">
    <location>
        <position position="166"/>
    </location>
</feature>
<feature type="cross-link" description="Glycyl lysine isopeptide (Lys-Gly) (interchain with G-Cter in SUMO2)" evidence="1">
    <location>
        <position position="180"/>
    </location>
</feature>
<evidence type="ECO:0000250" key="1">
    <source>
        <dbReference type="UniProtKB" id="Q9NQV5"/>
    </source>
</evidence>
<evidence type="ECO:0000255" key="2">
    <source>
        <dbReference type="PROSITE-ProRule" id="PRU00190"/>
    </source>
</evidence>
<evidence type="ECO:0000256" key="3">
    <source>
        <dbReference type="SAM" id="MobiDB-lite"/>
    </source>
</evidence>
<evidence type="ECO:0000269" key="4">
    <source>
    </source>
</evidence>
<evidence type="ECO:0000305" key="5"/>
<evidence type="ECO:0007744" key="6">
    <source>
    </source>
</evidence>
<reference key="1">
    <citation type="journal article" date="2009" name="PLoS Biol.">
        <title>Lineage-specific biology revealed by a finished genome assembly of the mouse.</title>
        <authorList>
            <person name="Church D.M."/>
            <person name="Goodstadt L."/>
            <person name="Hillier L.W."/>
            <person name="Zody M.C."/>
            <person name="Goldstein S."/>
            <person name="She X."/>
            <person name="Bult C.J."/>
            <person name="Agarwala R."/>
            <person name="Cherry J.L."/>
            <person name="DiCuccio M."/>
            <person name="Hlavina W."/>
            <person name="Kapustin Y."/>
            <person name="Meric P."/>
            <person name="Maglott D."/>
            <person name="Birtle Z."/>
            <person name="Marques A.C."/>
            <person name="Graves T."/>
            <person name="Zhou S."/>
            <person name="Teague B."/>
            <person name="Potamousis K."/>
            <person name="Churas C."/>
            <person name="Place M."/>
            <person name="Herschleb J."/>
            <person name="Runnheim R."/>
            <person name="Forrest D."/>
            <person name="Amos-Landgraf J."/>
            <person name="Schwartz D.C."/>
            <person name="Cheng Z."/>
            <person name="Lindblad-Toh K."/>
            <person name="Eichler E.E."/>
            <person name="Ponting C.P."/>
        </authorList>
    </citation>
    <scope>NUCLEOTIDE SEQUENCE [LARGE SCALE GENOMIC DNA]</scope>
    <source>
        <strain>C57BL/6J</strain>
    </source>
</reference>
<reference key="2">
    <citation type="journal article" date="2010" name="Cell">
        <title>A tissue-specific atlas of mouse protein phosphorylation and expression.</title>
        <authorList>
            <person name="Huttlin E.L."/>
            <person name="Jedrychowski M.P."/>
            <person name="Elias J.E."/>
            <person name="Goswami T."/>
            <person name="Rad R."/>
            <person name="Beausoleil S.A."/>
            <person name="Villen J."/>
            <person name="Haas W."/>
            <person name="Sowa M.E."/>
            <person name="Gygi S.P."/>
        </authorList>
    </citation>
    <scope>PHOSPHORYLATION [LARGE SCALE ANALYSIS] AT SER-29</scope>
    <scope>IDENTIFICATION BY MASS SPECTROMETRY [LARGE SCALE ANALYSIS]</scope>
    <source>
        <tissue>Kidney</tissue>
    </source>
</reference>
<reference key="3">
    <citation type="journal article" date="2015" name="Blood">
        <title>Loss of PRDM11 promotes MYC-driven lymphomagenesis.</title>
        <authorList>
            <person name="Fog C.K."/>
            <person name="Asmar F."/>
            <person name="Come C."/>
            <person name="Jensen K.T."/>
            <person name="Johansen J.V."/>
            <person name="Kheir T.B."/>
            <person name="Jacobsen L."/>
            <person name="Friis C."/>
            <person name="Louw A."/>
            <person name="Rosgaard L."/>
            <person name="Obro N.F."/>
            <person name="Marquart H.V."/>
            <person name="Anthonsen K."/>
            <person name="Braat A.K."/>
            <person name="van Lohuizen M."/>
            <person name="Ralfkiaer E."/>
            <person name="Gronbaek K."/>
            <person name="Lund A.H."/>
        </authorList>
    </citation>
    <scope>TISSUE SPECIFICITY</scope>
    <scope>DISRUPTION PHENOTYPE</scope>
</reference>
<sequence>MTENMKECLAHTKAAVGDMVTVVKTEVCSPLRDQEYGQPCSRRLEPSSMEVEPKKLKGKRDLIVTKSFQQVDFWFCESCQEYFVDECPNHGPPVFVSDTPVPVGIPDRAALTIPQGMEVVKDAGGESDVRCINEVIPKGHIFGPYEGQISTQDKSAGFFSWLIVDKNNRYKSIDGSDETKANWMRYVVISREEREQNLLAFQHSERIYFRACRDIRPGERLRVWYSEDYMKRLHSMSQETIHRNLARGEKRLQREKAEQALENPEDLRGPTQFPVLKQGRSPYKRSFDEGDIHPQAKKKKIDLIFKDVLEASLESGNVEARQLALSTSLVIRKVPKYQDDDYGRAALTQGICRTPGEGDWKVPQRVAKELGPLEDEEEEPTSFKADSPAEASLASDPHELPTTSFCPNCIRLKKKVRELQAELDMLKSGKLPEPSLLPPQVLELPEFSDPAGKFLRMRLLLKGRVCSATRAHCVEGGPERSALSQPPARRPEECNSAEAAPSWGGSPVPQVTEAGWLEDRGREGIACANLYILLVNKICPICRRAVCCVLDLVFSLGGGAHCCLP</sequence>
<organism>
    <name type="scientific">Mus musculus</name>
    <name type="common">Mouse</name>
    <dbReference type="NCBI Taxonomy" id="10090"/>
    <lineage>
        <taxon>Eukaryota</taxon>
        <taxon>Metazoa</taxon>
        <taxon>Chordata</taxon>
        <taxon>Craniata</taxon>
        <taxon>Vertebrata</taxon>
        <taxon>Euteleostomi</taxon>
        <taxon>Mammalia</taxon>
        <taxon>Eutheria</taxon>
        <taxon>Euarchontoglires</taxon>
        <taxon>Glires</taxon>
        <taxon>Rodentia</taxon>
        <taxon>Myomorpha</taxon>
        <taxon>Muroidea</taxon>
        <taxon>Muridae</taxon>
        <taxon>Murinae</taxon>
        <taxon>Mus</taxon>
        <taxon>Mus</taxon>
    </lineage>
</organism>